<comment type="function">
    <text evidence="1">Catalyzes the dephosphorylation of undecaprenyl diphosphate (UPP). Confers resistance to bacitracin.</text>
</comment>
<comment type="catalytic activity">
    <reaction evidence="1">
        <text>di-trans,octa-cis-undecaprenyl diphosphate + H2O = di-trans,octa-cis-undecaprenyl phosphate + phosphate + H(+)</text>
        <dbReference type="Rhea" id="RHEA:28094"/>
        <dbReference type="ChEBI" id="CHEBI:15377"/>
        <dbReference type="ChEBI" id="CHEBI:15378"/>
        <dbReference type="ChEBI" id="CHEBI:43474"/>
        <dbReference type="ChEBI" id="CHEBI:58405"/>
        <dbReference type="ChEBI" id="CHEBI:60392"/>
        <dbReference type="EC" id="3.6.1.27"/>
    </reaction>
</comment>
<comment type="subcellular location">
    <subcellularLocation>
        <location evidence="1">Cell membrane</location>
        <topology evidence="1">Multi-pass membrane protein</topology>
    </subcellularLocation>
</comment>
<comment type="miscellaneous">
    <text>Bacitracin is thought to be involved in the inhibition of peptidoglycan synthesis by sequestering undecaprenyl diphosphate, thereby reducing the pool of lipid carrier available.</text>
</comment>
<comment type="similarity">
    <text evidence="1">Belongs to the UppP family.</text>
</comment>
<dbReference type="EC" id="3.6.1.27" evidence="1"/>
<dbReference type="EMBL" id="CP000024">
    <property type="protein sequence ID" value="AAV61774.1"/>
    <property type="molecule type" value="Genomic_DNA"/>
</dbReference>
<dbReference type="SMR" id="Q5M1R0"/>
<dbReference type="KEGG" id="stc:str0160"/>
<dbReference type="HOGENOM" id="CLU_060296_2_0_9"/>
<dbReference type="GO" id="GO:0005886">
    <property type="term" value="C:plasma membrane"/>
    <property type="evidence" value="ECO:0007669"/>
    <property type="project" value="UniProtKB-SubCell"/>
</dbReference>
<dbReference type="GO" id="GO:0050380">
    <property type="term" value="F:undecaprenyl-diphosphatase activity"/>
    <property type="evidence" value="ECO:0007669"/>
    <property type="project" value="UniProtKB-UniRule"/>
</dbReference>
<dbReference type="GO" id="GO:0071555">
    <property type="term" value="P:cell wall organization"/>
    <property type="evidence" value="ECO:0007669"/>
    <property type="project" value="UniProtKB-KW"/>
</dbReference>
<dbReference type="GO" id="GO:0009252">
    <property type="term" value="P:peptidoglycan biosynthetic process"/>
    <property type="evidence" value="ECO:0007669"/>
    <property type="project" value="UniProtKB-KW"/>
</dbReference>
<dbReference type="GO" id="GO:0008360">
    <property type="term" value="P:regulation of cell shape"/>
    <property type="evidence" value="ECO:0007669"/>
    <property type="project" value="UniProtKB-KW"/>
</dbReference>
<dbReference type="GO" id="GO:0046677">
    <property type="term" value="P:response to antibiotic"/>
    <property type="evidence" value="ECO:0007669"/>
    <property type="project" value="UniProtKB-UniRule"/>
</dbReference>
<dbReference type="HAMAP" id="MF_01006">
    <property type="entry name" value="Undec_diphosphatase"/>
    <property type="match status" value="1"/>
</dbReference>
<dbReference type="InterPro" id="IPR003824">
    <property type="entry name" value="UppP"/>
</dbReference>
<dbReference type="NCBIfam" id="NF001390">
    <property type="entry name" value="PRK00281.1-4"/>
    <property type="match status" value="1"/>
</dbReference>
<dbReference type="NCBIfam" id="NF001391">
    <property type="entry name" value="PRK00281.1-5"/>
    <property type="match status" value="1"/>
</dbReference>
<dbReference type="NCBIfam" id="TIGR00753">
    <property type="entry name" value="undec_PP_bacA"/>
    <property type="match status" value="1"/>
</dbReference>
<dbReference type="PANTHER" id="PTHR30622">
    <property type="entry name" value="UNDECAPRENYL-DIPHOSPHATASE"/>
    <property type="match status" value="1"/>
</dbReference>
<dbReference type="PANTHER" id="PTHR30622:SF3">
    <property type="entry name" value="UNDECAPRENYL-DIPHOSPHATASE"/>
    <property type="match status" value="1"/>
</dbReference>
<dbReference type="Pfam" id="PF02673">
    <property type="entry name" value="BacA"/>
    <property type="match status" value="1"/>
</dbReference>
<organism>
    <name type="scientific">Streptococcus thermophilus (strain CNRZ 1066)</name>
    <dbReference type="NCBI Taxonomy" id="299768"/>
    <lineage>
        <taxon>Bacteria</taxon>
        <taxon>Bacillati</taxon>
        <taxon>Bacillota</taxon>
        <taxon>Bacilli</taxon>
        <taxon>Lactobacillales</taxon>
        <taxon>Streptococcaceae</taxon>
        <taxon>Streptococcus</taxon>
    </lineage>
</organism>
<feature type="chain" id="PRO_0000151220" description="Undecaprenyl-diphosphatase">
    <location>
        <begin position="1"/>
        <end position="288"/>
    </location>
</feature>
<feature type="transmembrane region" description="Helical" evidence="1">
    <location>
        <begin position="25"/>
        <end position="45"/>
    </location>
</feature>
<feature type="transmembrane region" description="Helical" evidence="1">
    <location>
        <begin position="53"/>
        <end position="73"/>
    </location>
</feature>
<feature type="transmembrane region" description="Helical" evidence="1">
    <location>
        <begin position="93"/>
        <end position="113"/>
    </location>
</feature>
<feature type="transmembrane region" description="Helical" evidence="1">
    <location>
        <begin position="121"/>
        <end position="141"/>
    </location>
</feature>
<feature type="transmembrane region" description="Helical" evidence="1">
    <location>
        <begin position="171"/>
        <end position="191"/>
    </location>
</feature>
<feature type="transmembrane region" description="Helical" evidence="1">
    <location>
        <begin position="196"/>
        <end position="216"/>
    </location>
</feature>
<feature type="transmembrane region" description="Helical" evidence="1">
    <location>
        <begin position="231"/>
        <end position="251"/>
    </location>
</feature>
<feature type="transmembrane region" description="Helical" evidence="1">
    <location>
        <begin position="263"/>
        <end position="283"/>
    </location>
</feature>
<accession>Q5M1R0</accession>
<protein>
    <recommendedName>
        <fullName evidence="1">Undecaprenyl-diphosphatase</fullName>
        <ecNumber evidence="1">3.6.1.27</ecNumber>
    </recommendedName>
    <alternativeName>
        <fullName evidence="1">Bacitracin resistance protein</fullName>
    </alternativeName>
    <alternativeName>
        <fullName evidence="1">Undecaprenyl pyrophosphate phosphatase</fullName>
    </alternativeName>
</protein>
<keyword id="KW-0046">Antibiotic resistance</keyword>
<keyword id="KW-1003">Cell membrane</keyword>
<keyword id="KW-0133">Cell shape</keyword>
<keyword id="KW-0961">Cell wall biogenesis/degradation</keyword>
<keyword id="KW-0378">Hydrolase</keyword>
<keyword id="KW-0472">Membrane</keyword>
<keyword id="KW-0573">Peptidoglycan synthesis</keyword>
<keyword id="KW-0812">Transmembrane</keyword>
<keyword id="KW-1133">Transmembrane helix</keyword>
<evidence type="ECO:0000255" key="1">
    <source>
        <dbReference type="HAMAP-Rule" id="MF_01006"/>
    </source>
</evidence>
<name>UPPP_STRT1</name>
<reference key="1">
    <citation type="journal article" date="2004" name="Nat. Biotechnol.">
        <title>Complete sequence and comparative genome analysis of the dairy bacterium Streptococcus thermophilus.</title>
        <authorList>
            <person name="Bolotin A."/>
            <person name="Quinquis B."/>
            <person name="Renault P."/>
            <person name="Sorokin A."/>
            <person name="Ehrlich S.D."/>
            <person name="Kulakauskas S."/>
            <person name="Lapidus A."/>
            <person name="Goltsman E."/>
            <person name="Mazur M."/>
            <person name="Pusch G.D."/>
            <person name="Fonstein M."/>
            <person name="Overbeek R."/>
            <person name="Kyprides N."/>
            <person name="Purnelle B."/>
            <person name="Prozzi D."/>
            <person name="Ngui K."/>
            <person name="Masuy D."/>
            <person name="Hancy F."/>
            <person name="Burteau S."/>
            <person name="Boutry M."/>
            <person name="Delcour J."/>
            <person name="Goffeau A."/>
            <person name="Hols P."/>
        </authorList>
    </citation>
    <scope>NUCLEOTIDE SEQUENCE [LARGE SCALE GENOMIC DNA]</scope>
    <source>
        <strain>CNRZ 1066</strain>
    </source>
</reference>
<gene>
    <name evidence="1" type="primary">uppP</name>
    <name type="synonym">bacA</name>
    <name type="ordered locus">str0160</name>
</gene>
<sequence>MEIIMQTAQYIIELLKAVFLGIVEGITEWLPISSTGHLILVNEFLNLRQSKDFIDMFNIVMHLGAILAVMVIYFKRLNPFQPGKTAREVQLTWKLWLKVVIACIPSAFFGLLLDDWMEAHLSNFFVVAIMLVVYGIAFIWIEDRNRRVDPKVTDLARMSYKTAFYIGLFQVLSIIPGTSRSGATILGGIIVGTSRSVAADFTFFLGIPTMFGYSGLKAVKYFIDGNTLTGGQAAILLVASVTAFLVSLFVIRFLMNYIKKHDFTVFGKYRIVLGIIVLFYGAVKLIFG</sequence>
<proteinExistence type="inferred from homology"/>